<evidence type="ECO:0000255" key="1">
    <source>
        <dbReference type="HAMAP-Rule" id="MF_01369"/>
    </source>
</evidence>
<evidence type="ECO:0000305" key="2"/>
<protein>
    <recommendedName>
        <fullName evidence="1">Large ribosomal subunit protein uL23</fullName>
    </recommendedName>
    <alternativeName>
        <fullName evidence="2">50S ribosomal protein L23</fullName>
    </alternativeName>
</protein>
<gene>
    <name evidence="1" type="primary">rplW</name>
    <name type="ordered locus">BUAP5A_515</name>
</gene>
<organism>
    <name type="scientific">Buchnera aphidicola subsp. Acyrthosiphon pisum (strain 5A)</name>
    <dbReference type="NCBI Taxonomy" id="563178"/>
    <lineage>
        <taxon>Bacteria</taxon>
        <taxon>Pseudomonadati</taxon>
        <taxon>Pseudomonadota</taxon>
        <taxon>Gammaproteobacteria</taxon>
        <taxon>Enterobacterales</taxon>
        <taxon>Erwiniaceae</taxon>
        <taxon>Buchnera</taxon>
    </lineage>
</organism>
<reference key="1">
    <citation type="journal article" date="2009" name="Science">
        <title>The dynamics and time scale of ongoing genomic erosion in symbiotic bacteria.</title>
        <authorList>
            <person name="Moran N.A."/>
            <person name="McLaughlin H.J."/>
            <person name="Sorek R."/>
        </authorList>
    </citation>
    <scope>NUCLEOTIDE SEQUENCE [LARGE SCALE GENOMIC DNA]</scope>
    <source>
        <strain>5A</strain>
    </source>
</reference>
<proteinExistence type="inferred from homology"/>
<keyword id="KW-0687">Ribonucleoprotein</keyword>
<keyword id="KW-0689">Ribosomal protein</keyword>
<keyword id="KW-0694">RNA-binding</keyword>
<keyword id="KW-0699">rRNA-binding</keyword>
<dbReference type="EMBL" id="CP001161">
    <property type="protein sequence ID" value="ACL30866.1"/>
    <property type="molecule type" value="Genomic_DNA"/>
</dbReference>
<dbReference type="RefSeq" id="WP_009874473.1">
    <property type="nucleotide sequence ID" value="NC_011833.1"/>
</dbReference>
<dbReference type="SMR" id="B8D9U5"/>
<dbReference type="KEGG" id="bap:BUAP5A_515"/>
<dbReference type="HOGENOM" id="CLU_037562_3_1_6"/>
<dbReference type="OrthoDB" id="9793353at2"/>
<dbReference type="Proteomes" id="UP000006904">
    <property type="component" value="Chromosome"/>
</dbReference>
<dbReference type="GO" id="GO:1990904">
    <property type="term" value="C:ribonucleoprotein complex"/>
    <property type="evidence" value="ECO:0007669"/>
    <property type="project" value="UniProtKB-KW"/>
</dbReference>
<dbReference type="GO" id="GO:0005840">
    <property type="term" value="C:ribosome"/>
    <property type="evidence" value="ECO:0007669"/>
    <property type="project" value="UniProtKB-KW"/>
</dbReference>
<dbReference type="GO" id="GO:0019843">
    <property type="term" value="F:rRNA binding"/>
    <property type="evidence" value="ECO:0007669"/>
    <property type="project" value="UniProtKB-UniRule"/>
</dbReference>
<dbReference type="GO" id="GO:0003735">
    <property type="term" value="F:structural constituent of ribosome"/>
    <property type="evidence" value="ECO:0007669"/>
    <property type="project" value="InterPro"/>
</dbReference>
<dbReference type="GO" id="GO:0006412">
    <property type="term" value="P:translation"/>
    <property type="evidence" value="ECO:0007669"/>
    <property type="project" value="UniProtKB-UniRule"/>
</dbReference>
<dbReference type="FunFam" id="3.30.70.330:FF:000001">
    <property type="entry name" value="50S ribosomal protein L23"/>
    <property type="match status" value="1"/>
</dbReference>
<dbReference type="Gene3D" id="3.30.70.330">
    <property type="match status" value="1"/>
</dbReference>
<dbReference type="HAMAP" id="MF_01369_B">
    <property type="entry name" value="Ribosomal_uL23_B"/>
    <property type="match status" value="1"/>
</dbReference>
<dbReference type="InterPro" id="IPR012677">
    <property type="entry name" value="Nucleotide-bd_a/b_plait_sf"/>
</dbReference>
<dbReference type="InterPro" id="IPR013025">
    <property type="entry name" value="Ribosomal_uL23-like"/>
</dbReference>
<dbReference type="InterPro" id="IPR012678">
    <property type="entry name" value="Ribosomal_uL23/eL15/eS24_sf"/>
</dbReference>
<dbReference type="NCBIfam" id="NF004358">
    <property type="entry name" value="PRK05738.1-1"/>
    <property type="match status" value="1"/>
</dbReference>
<dbReference type="NCBIfam" id="NF004359">
    <property type="entry name" value="PRK05738.1-3"/>
    <property type="match status" value="1"/>
</dbReference>
<dbReference type="NCBIfam" id="NF004363">
    <property type="entry name" value="PRK05738.2-4"/>
    <property type="match status" value="1"/>
</dbReference>
<dbReference type="PANTHER" id="PTHR11620">
    <property type="entry name" value="60S RIBOSOMAL PROTEIN L23A"/>
    <property type="match status" value="1"/>
</dbReference>
<dbReference type="Pfam" id="PF00276">
    <property type="entry name" value="Ribosomal_L23"/>
    <property type="match status" value="1"/>
</dbReference>
<dbReference type="SUPFAM" id="SSF54189">
    <property type="entry name" value="Ribosomal proteins S24e, L23 and L15e"/>
    <property type="match status" value="1"/>
</dbReference>
<sequence>MISEERLLKILLSPHVSEKTSISMEKFNTVVLKVLNNATKYEIKYAVKKIFDVDVDSIKTLKVKGKKKRQSNRIIQRSHWKKAYIKVKKGCNLDFIGNTE</sequence>
<feature type="chain" id="PRO_1000184070" description="Large ribosomal subunit protein uL23">
    <location>
        <begin position="1"/>
        <end position="100"/>
    </location>
</feature>
<name>RL23_BUCA5</name>
<comment type="function">
    <text evidence="1">One of the early assembly proteins it binds 23S rRNA. One of the proteins that surrounds the polypeptide exit tunnel on the outside of the ribosome. Forms the main docking site for trigger factor binding to the ribosome.</text>
</comment>
<comment type="subunit">
    <text evidence="1">Part of the 50S ribosomal subunit. Contacts protein L29, and trigger factor when it is bound to the ribosome.</text>
</comment>
<comment type="similarity">
    <text evidence="1">Belongs to the universal ribosomal protein uL23 family.</text>
</comment>
<accession>B8D9U5</accession>